<sequence length="379" mass="42664">MTNIRKNHPLMKIINHSFIDLPSPSNISSWWNFGSLLGLCLMIQIITGLFLAMHYTSDTTTAFSSVAHICRDVNYGWIIRYLHANGASMFFLCLFIHVGRGLYYGSFTLLDTWNIGVMLLLAVMATAFMGYVLPWGQMSFWGATVITNLLSAIPYIGMNLVEWIWGGFSVDKATLTRFFAFHFILPFIITALVMIHLIFLHETGSNNPSGISSDSDKIPFHPYYSFKDLLGAVFLLTTLSVLVLFSPDLLGDPDNYTPANPLITPPHIKPEWYFLFAYAILRSIPNKLGGVMALAMSILILALIPHLHTAKQRSVMFRPLSQCLFWVLVANLLTLTWIGGQPVENPFIIIGQTASILYFLTILVLMPLTSLFENKLLKW</sequence>
<evidence type="ECO:0000250" key="1"/>
<evidence type="ECO:0000250" key="2">
    <source>
        <dbReference type="UniProtKB" id="P00157"/>
    </source>
</evidence>
<evidence type="ECO:0000255" key="3">
    <source>
        <dbReference type="PROSITE-ProRule" id="PRU00967"/>
    </source>
</evidence>
<evidence type="ECO:0000255" key="4">
    <source>
        <dbReference type="PROSITE-ProRule" id="PRU00968"/>
    </source>
</evidence>
<reference key="1">
    <citation type="submission" date="2003-10" db="EMBL/GenBank/DDBJ databases">
        <title>61 primate SINEs and the evolution of strepsirrhines.</title>
        <authorList>
            <person name="Roos C."/>
            <person name="Schmitz J."/>
            <person name="Zischler H."/>
        </authorList>
    </citation>
    <scope>NUCLEOTIDE SEQUENCE [GENOMIC DNA]</scope>
</reference>
<geneLocation type="mitochondrion"/>
<protein>
    <recommendedName>
        <fullName>Cytochrome b</fullName>
    </recommendedName>
    <alternativeName>
        <fullName>Complex III subunit 3</fullName>
    </alternativeName>
    <alternativeName>
        <fullName>Complex III subunit III</fullName>
    </alternativeName>
    <alternativeName>
        <fullName>Cytochrome b-c1 complex subunit 3</fullName>
    </alternativeName>
    <alternativeName>
        <fullName>Ubiquinol-cytochrome-c reductase complex cytochrome b subunit</fullName>
    </alternativeName>
</protein>
<dbReference type="EMBL" id="AY441476">
    <property type="protein sequence ID" value="AAS00157.1"/>
    <property type="molecule type" value="Genomic_DNA"/>
</dbReference>
<dbReference type="SMR" id="Q5VJ37"/>
<dbReference type="GO" id="GO:0005743">
    <property type="term" value="C:mitochondrial inner membrane"/>
    <property type="evidence" value="ECO:0007669"/>
    <property type="project" value="UniProtKB-SubCell"/>
</dbReference>
<dbReference type="GO" id="GO:0045275">
    <property type="term" value="C:respiratory chain complex III"/>
    <property type="evidence" value="ECO:0007669"/>
    <property type="project" value="InterPro"/>
</dbReference>
<dbReference type="GO" id="GO:0046872">
    <property type="term" value="F:metal ion binding"/>
    <property type="evidence" value="ECO:0007669"/>
    <property type="project" value="UniProtKB-KW"/>
</dbReference>
<dbReference type="GO" id="GO:0008121">
    <property type="term" value="F:ubiquinol-cytochrome-c reductase activity"/>
    <property type="evidence" value="ECO:0007669"/>
    <property type="project" value="InterPro"/>
</dbReference>
<dbReference type="GO" id="GO:0006122">
    <property type="term" value="P:mitochondrial electron transport, ubiquinol to cytochrome c"/>
    <property type="evidence" value="ECO:0007669"/>
    <property type="project" value="TreeGrafter"/>
</dbReference>
<dbReference type="CDD" id="cd00290">
    <property type="entry name" value="cytochrome_b_C"/>
    <property type="match status" value="1"/>
</dbReference>
<dbReference type="CDD" id="cd00284">
    <property type="entry name" value="Cytochrome_b_N"/>
    <property type="match status" value="1"/>
</dbReference>
<dbReference type="FunFam" id="1.20.810.10:FF:000002">
    <property type="entry name" value="Cytochrome b"/>
    <property type="match status" value="1"/>
</dbReference>
<dbReference type="Gene3D" id="1.20.810.10">
    <property type="entry name" value="Cytochrome Bc1 Complex, Chain C"/>
    <property type="match status" value="1"/>
</dbReference>
<dbReference type="InterPro" id="IPR005798">
    <property type="entry name" value="Cyt_b/b6_C"/>
</dbReference>
<dbReference type="InterPro" id="IPR036150">
    <property type="entry name" value="Cyt_b/b6_C_sf"/>
</dbReference>
<dbReference type="InterPro" id="IPR005797">
    <property type="entry name" value="Cyt_b/b6_N"/>
</dbReference>
<dbReference type="InterPro" id="IPR027387">
    <property type="entry name" value="Cytb/b6-like_sf"/>
</dbReference>
<dbReference type="InterPro" id="IPR030689">
    <property type="entry name" value="Cytochrome_b"/>
</dbReference>
<dbReference type="InterPro" id="IPR048260">
    <property type="entry name" value="Cytochrome_b_C_euk/bac"/>
</dbReference>
<dbReference type="InterPro" id="IPR048259">
    <property type="entry name" value="Cytochrome_b_N_euk/bac"/>
</dbReference>
<dbReference type="InterPro" id="IPR016174">
    <property type="entry name" value="Di-haem_cyt_TM"/>
</dbReference>
<dbReference type="PANTHER" id="PTHR19271">
    <property type="entry name" value="CYTOCHROME B"/>
    <property type="match status" value="1"/>
</dbReference>
<dbReference type="PANTHER" id="PTHR19271:SF16">
    <property type="entry name" value="CYTOCHROME B"/>
    <property type="match status" value="1"/>
</dbReference>
<dbReference type="Pfam" id="PF00032">
    <property type="entry name" value="Cytochrom_B_C"/>
    <property type="match status" value="1"/>
</dbReference>
<dbReference type="Pfam" id="PF00033">
    <property type="entry name" value="Cytochrome_B"/>
    <property type="match status" value="1"/>
</dbReference>
<dbReference type="PIRSF" id="PIRSF038885">
    <property type="entry name" value="COB"/>
    <property type="match status" value="1"/>
</dbReference>
<dbReference type="SUPFAM" id="SSF81648">
    <property type="entry name" value="a domain/subunit of cytochrome bc1 complex (Ubiquinol-cytochrome c reductase)"/>
    <property type="match status" value="1"/>
</dbReference>
<dbReference type="SUPFAM" id="SSF81342">
    <property type="entry name" value="Transmembrane di-heme cytochromes"/>
    <property type="match status" value="1"/>
</dbReference>
<dbReference type="PROSITE" id="PS51003">
    <property type="entry name" value="CYTB_CTER"/>
    <property type="match status" value="1"/>
</dbReference>
<dbReference type="PROSITE" id="PS51002">
    <property type="entry name" value="CYTB_NTER"/>
    <property type="match status" value="1"/>
</dbReference>
<proteinExistence type="inferred from homology"/>
<feature type="chain" id="PRO_0000061290" description="Cytochrome b">
    <location>
        <begin position="1"/>
        <end position="379"/>
    </location>
</feature>
<feature type="transmembrane region" description="Helical" evidence="2">
    <location>
        <begin position="33"/>
        <end position="53"/>
    </location>
</feature>
<feature type="transmembrane region" description="Helical" evidence="2">
    <location>
        <begin position="77"/>
        <end position="98"/>
    </location>
</feature>
<feature type="transmembrane region" description="Helical" evidence="2">
    <location>
        <begin position="113"/>
        <end position="133"/>
    </location>
</feature>
<feature type="transmembrane region" description="Helical" evidence="2">
    <location>
        <begin position="178"/>
        <end position="198"/>
    </location>
</feature>
<feature type="transmembrane region" description="Helical" evidence="2">
    <location>
        <begin position="226"/>
        <end position="246"/>
    </location>
</feature>
<feature type="transmembrane region" description="Helical" evidence="2">
    <location>
        <begin position="288"/>
        <end position="308"/>
    </location>
</feature>
<feature type="transmembrane region" description="Helical" evidence="2">
    <location>
        <begin position="320"/>
        <end position="340"/>
    </location>
</feature>
<feature type="transmembrane region" description="Helical" evidence="2">
    <location>
        <begin position="347"/>
        <end position="367"/>
    </location>
</feature>
<feature type="binding site" description="axial binding residue" evidence="2">
    <location>
        <position position="83"/>
    </location>
    <ligand>
        <name>heme b</name>
        <dbReference type="ChEBI" id="CHEBI:60344"/>
        <label>b562</label>
    </ligand>
    <ligandPart>
        <name>Fe</name>
        <dbReference type="ChEBI" id="CHEBI:18248"/>
    </ligandPart>
</feature>
<feature type="binding site" description="axial binding residue" evidence="2">
    <location>
        <position position="97"/>
    </location>
    <ligand>
        <name>heme b</name>
        <dbReference type="ChEBI" id="CHEBI:60344"/>
        <label>b566</label>
    </ligand>
    <ligandPart>
        <name>Fe</name>
        <dbReference type="ChEBI" id="CHEBI:18248"/>
    </ligandPart>
</feature>
<feature type="binding site" description="axial binding residue" evidence="2">
    <location>
        <position position="182"/>
    </location>
    <ligand>
        <name>heme b</name>
        <dbReference type="ChEBI" id="CHEBI:60344"/>
        <label>b562</label>
    </ligand>
    <ligandPart>
        <name>Fe</name>
        <dbReference type="ChEBI" id="CHEBI:18248"/>
    </ligandPart>
</feature>
<feature type="binding site" description="axial binding residue" evidence="2">
    <location>
        <position position="196"/>
    </location>
    <ligand>
        <name>heme b</name>
        <dbReference type="ChEBI" id="CHEBI:60344"/>
        <label>b566</label>
    </ligand>
    <ligandPart>
        <name>Fe</name>
        <dbReference type="ChEBI" id="CHEBI:18248"/>
    </ligandPart>
</feature>
<feature type="binding site" evidence="2">
    <location>
        <position position="201"/>
    </location>
    <ligand>
        <name>a ubiquinone</name>
        <dbReference type="ChEBI" id="CHEBI:16389"/>
    </ligand>
</feature>
<name>CYB_XANPY</name>
<organism>
    <name type="scientific">Xanthonycticebus pygmaeus</name>
    <name type="common">Pygmy slow loris</name>
    <name type="synonym">Nycticebus pygmaeus</name>
    <dbReference type="NCBI Taxonomy" id="101278"/>
    <lineage>
        <taxon>Eukaryota</taxon>
        <taxon>Metazoa</taxon>
        <taxon>Chordata</taxon>
        <taxon>Craniata</taxon>
        <taxon>Vertebrata</taxon>
        <taxon>Euteleostomi</taxon>
        <taxon>Mammalia</taxon>
        <taxon>Eutheria</taxon>
        <taxon>Euarchontoglires</taxon>
        <taxon>Primates</taxon>
        <taxon>Strepsirrhini</taxon>
        <taxon>Lorisiformes</taxon>
        <taxon>Lorisidae</taxon>
        <taxon>Xanthonycticebus</taxon>
    </lineage>
</organism>
<keyword id="KW-0249">Electron transport</keyword>
<keyword id="KW-0349">Heme</keyword>
<keyword id="KW-0408">Iron</keyword>
<keyword id="KW-0472">Membrane</keyword>
<keyword id="KW-0479">Metal-binding</keyword>
<keyword id="KW-0496">Mitochondrion</keyword>
<keyword id="KW-0999">Mitochondrion inner membrane</keyword>
<keyword id="KW-0679">Respiratory chain</keyword>
<keyword id="KW-0812">Transmembrane</keyword>
<keyword id="KW-1133">Transmembrane helix</keyword>
<keyword id="KW-0813">Transport</keyword>
<keyword id="KW-0830">Ubiquinone</keyword>
<accession>Q5VJ37</accession>
<comment type="function">
    <text evidence="2">Component of the ubiquinol-cytochrome c reductase complex (complex III or cytochrome b-c1 complex) that is part of the mitochondrial respiratory chain. The b-c1 complex mediates electron transfer from ubiquinol to cytochrome c. Contributes to the generation of a proton gradient across the mitochondrial membrane that is then used for ATP synthesis.</text>
</comment>
<comment type="cofactor">
    <cofactor evidence="2">
        <name>heme b</name>
        <dbReference type="ChEBI" id="CHEBI:60344"/>
    </cofactor>
    <text evidence="2">Binds 2 heme b groups non-covalently.</text>
</comment>
<comment type="subunit">
    <text evidence="2">The cytochrome bc1 complex contains 11 subunits: 3 respiratory subunits (MT-CYB, CYC1 and UQCRFS1), 2 core proteins (UQCRC1 and UQCRC2) and 6 low-molecular weight proteins (UQCRH/QCR6, UQCRB/QCR7, UQCRQ/QCR8, UQCR10/QCR9, UQCR11/QCR10 and a cleavage product of UQCRFS1). This cytochrome bc1 complex then forms a dimer.</text>
</comment>
<comment type="subcellular location">
    <subcellularLocation>
        <location evidence="2">Mitochondrion inner membrane</location>
        <topology evidence="2">Multi-pass membrane protein</topology>
    </subcellularLocation>
</comment>
<comment type="miscellaneous">
    <text evidence="1">Heme 1 (or BL or b562) is low-potential and absorbs at about 562 nm, and heme 2 (or BH or b566) is high-potential and absorbs at about 566 nm.</text>
</comment>
<comment type="similarity">
    <text evidence="3 4">Belongs to the cytochrome b family.</text>
</comment>
<comment type="caution">
    <text evidence="2">The full-length protein contains only eight transmembrane helices, not nine as predicted by bioinformatics tools.</text>
</comment>
<gene>
    <name type="primary">MT-CYB</name>
    <name type="synonym">COB</name>
    <name type="synonym">CYTB</name>
    <name type="synonym">MTCYB</name>
</gene>